<reference key="1">
    <citation type="journal article" date="2011" name="MBio">
        <title>Novel metabolic attributes of the genus Cyanothece, comprising a group of unicellular nitrogen-fixing Cyanobacteria.</title>
        <authorList>
            <person name="Bandyopadhyay A."/>
            <person name="Elvitigala T."/>
            <person name="Welsh E."/>
            <person name="Stockel J."/>
            <person name="Liberton M."/>
            <person name="Min H."/>
            <person name="Sherman L.A."/>
            <person name="Pakrasi H.B."/>
        </authorList>
    </citation>
    <scope>NUCLEOTIDE SEQUENCE [LARGE SCALE GENOMIC DNA]</scope>
    <source>
        <strain>PCC 8801 / RF-1</strain>
    </source>
</reference>
<dbReference type="EC" id="3.6.5.3" evidence="2"/>
<dbReference type="EMBL" id="CP001287">
    <property type="protein sequence ID" value="ACK65589.1"/>
    <property type="molecule type" value="Genomic_DNA"/>
</dbReference>
<dbReference type="RefSeq" id="WP_012594862.1">
    <property type="nucleotide sequence ID" value="NC_011726.1"/>
</dbReference>
<dbReference type="SMR" id="B7JUP5"/>
<dbReference type="STRING" id="41431.PCC8801_1536"/>
<dbReference type="KEGG" id="cyp:PCC8801_1536"/>
<dbReference type="eggNOG" id="COG0050">
    <property type="taxonomic scope" value="Bacteria"/>
</dbReference>
<dbReference type="HOGENOM" id="CLU_007265_0_0_3"/>
<dbReference type="OrthoDB" id="9804504at2"/>
<dbReference type="Proteomes" id="UP000008204">
    <property type="component" value="Chromosome"/>
</dbReference>
<dbReference type="GO" id="GO:0005829">
    <property type="term" value="C:cytosol"/>
    <property type="evidence" value="ECO:0007669"/>
    <property type="project" value="TreeGrafter"/>
</dbReference>
<dbReference type="GO" id="GO:0005525">
    <property type="term" value="F:GTP binding"/>
    <property type="evidence" value="ECO:0007669"/>
    <property type="project" value="UniProtKB-UniRule"/>
</dbReference>
<dbReference type="GO" id="GO:0003924">
    <property type="term" value="F:GTPase activity"/>
    <property type="evidence" value="ECO:0007669"/>
    <property type="project" value="InterPro"/>
</dbReference>
<dbReference type="GO" id="GO:0003746">
    <property type="term" value="F:translation elongation factor activity"/>
    <property type="evidence" value="ECO:0007669"/>
    <property type="project" value="UniProtKB-UniRule"/>
</dbReference>
<dbReference type="CDD" id="cd01884">
    <property type="entry name" value="EF_Tu"/>
    <property type="match status" value="1"/>
</dbReference>
<dbReference type="CDD" id="cd03697">
    <property type="entry name" value="EFTU_II"/>
    <property type="match status" value="1"/>
</dbReference>
<dbReference type="CDD" id="cd03707">
    <property type="entry name" value="EFTU_III"/>
    <property type="match status" value="1"/>
</dbReference>
<dbReference type="FunFam" id="2.40.30.10:FF:000001">
    <property type="entry name" value="Elongation factor Tu"/>
    <property type="match status" value="1"/>
</dbReference>
<dbReference type="FunFam" id="2.40.30.10:FF:000046">
    <property type="entry name" value="Elongation factor Tu"/>
    <property type="match status" value="1"/>
</dbReference>
<dbReference type="FunFam" id="3.40.50.300:FF:000003">
    <property type="entry name" value="Elongation factor Tu"/>
    <property type="match status" value="1"/>
</dbReference>
<dbReference type="Gene3D" id="3.40.50.300">
    <property type="entry name" value="P-loop containing nucleotide triphosphate hydrolases"/>
    <property type="match status" value="1"/>
</dbReference>
<dbReference type="Gene3D" id="2.40.30.10">
    <property type="entry name" value="Translation factors"/>
    <property type="match status" value="2"/>
</dbReference>
<dbReference type="HAMAP" id="MF_00118_B">
    <property type="entry name" value="EF_Tu_B"/>
    <property type="match status" value="1"/>
</dbReference>
<dbReference type="InterPro" id="IPR041709">
    <property type="entry name" value="EF-Tu_GTP-bd"/>
</dbReference>
<dbReference type="InterPro" id="IPR050055">
    <property type="entry name" value="EF-Tu_GTPase"/>
</dbReference>
<dbReference type="InterPro" id="IPR004161">
    <property type="entry name" value="EFTu-like_2"/>
</dbReference>
<dbReference type="InterPro" id="IPR033720">
    <property type="entry name" value="EFTU_2"/>
</dbReference>
<dbReference type="InterPro" id="IPR031157">
    <property type="entry name" value="G_TR_CS"/>
</dbReference>
<dbReference type="InterPro" id="IPR027417">
    <property type="entry name" value="P-loop_NTPase"/>
</dbReference>
<dbReference type="InterPro" id="IPR005225">
    <property type="entry name" value="Small_GTP-bd"/>
</dbReference>
<dbReference type="InterPro" id="IPR000795">
    <property type="entry name" value="T_Tr_GTP-bd_dom"/>
</dbReference>
<dbReference type="InterPro" id="IPR009000">
    <property type="entry name" value="Transl_B-barrel_sf"/>
</dbReference>
<dbReference type="InterPro" id="IPR009001">
    <property type="entry name" value="Transl_elong_EF1A/Init_IF2_C"/>
</dbReference>
<dbReference type="InterPro" id="IPR004541">
    <property type="entry name" value="Transl_elong_EFTu/EF1A_bac/org"/>
</dbReference>
<dbReference type="InterPro" id="IPR004160">
    <property type="entry name" value="Transl_elong_EFTu/EF1A_C"/>
</dbReference>
<dbReference type="NCBIfam" id="TIGR00485">
    <property type="entry name" value="EF-Tu"/>
    <property type="match status" value="1"/>
</dbReference>
<dbReference type="NCBIfam" id="NF000766">
    <property type="entry name" value="PRK00049.1"/>
    <property type="match status" value="1"/>
</dbReference>
<dbReference type="NCBIfam" id="NF009372">
    <property type="entry name" value="PRK12735.1"/>
    <property type="match status" value="1"/>
</dbReference>
<dbReference type="NCBIfam" id="NF009373">
    <property type="entry name" value="PRK12736.1"/>
    <property type="match status" value="1"/>
</dbReference>
<dbReference type="NCBIfam" id="TIGR00231">
    <property type="entry name" value="small_GTP"/>
    <property type="match status" value="1"/>
</dbReference>
<dbReference type="PANTHER" id="PTHR43721:SF22">
    <property type="entry name" value="ELONGATION FACTOR TU, MITOCHONDRIAL"/>
    <property type="match status" value="1"/>
</dbReference>
<dbReference type="PANTHER" id="PTHR43721">
    <property type="entry name" value="ELONGATION FACTOR TU-RELATED"/>
    <property type="match status" value="1"/>
</dbReference>
<dbReference type="Pfam" id="PF00009">
    <property type="entry name" value="GTP_EFTU"/>
    <property type="match status" value="1"/>
</dbReference>
<dbReference type="Pfam" id="PF03144">
    <property type="entry name" value="GTP_EFTU_D2"/>
    <property type="match status" value="1"/>
</dbReference>
<dbReference type="Pfam" id="PF03143">
    <property type="entry name" value="GTP_EFTU_D3"/>
    <property type="match status" value="1"/>
</dbReference>
<dbReference type="PRINTS" id="PR00315">
    <property type="entry name" value="ELONGATNFCT"/>
</dbReference>
<dbReference type="SUPFAM" id="SSF50465">
    <property type="entry name" value="EF-Tu/eEF-1alpha/eIF2-gamma C-terminal domain"/>
    <property type="match status" value="1"/>
</dbReference>
<dbReference type="SUPFAM" id="SSF52540">
    <property type="entry name" value="P-loop containing nucleoside triphosphate hydrolases"/>
    <property type="match status" value="1"/>
</dbReference>
<dbReference type="SUPFAM" id="SSF50447">
    <property type="entry name" value="Translation proteins"/>
    <property type="match status" value="1"/>
</dbReference>
<dbReference type="PROSITE" id="PS00301">
    <property type="entry name" value="G_TR_1"/>
    <property type="match status" value="1"/>
</dbReference>
<dbReference type="PROSITE" id="PS51722">
    <property type="entry name" value="G_TR_2"/>
    <property type="match status" value="1"/>
</dbReference>
<proteinExistence type="inferred from homology"/>
<evidence type="ECO:0000250" key="1"/>
<evidence type="ECO:0000255" key="2">
    <source>
        <dbReference type="HAMAP-Rule" id="MF_00118"/>
    </source>
</evidence>
<comment type="function">
    <text evidence="2">GTP hydrolase that promotes the GTP-dependent binding of aminoacyl-tRNA to the A-site of ribosomes during protein biosynthesis.</text>
</comment>
<comment type="catalytic activity">
    <reaction evidence="2">
        <text>GTP + H2O = GDP + phosphate + H(+)</text>
        <dbReference type="Rhea" id="RHEA:19669"/>
        <dbReference type="ChEBI" id="CHEBI:15377"/>
        <dbReference type="ChEBI" id="CHEBI:15378"/>
        <dbReference type="ChEBI" id="CHEBI:37565"/>
        <dbReference type="ChEBI" id="CHEBI:43474"/>
        <dbReference type="ChEBI" id="CHEBI:58189"/>
        <dbReference type="EC" id="3.6.5.3"/>
    </reaction>
    <physiologicalReaction direction="left-to-right" evidence="2">
        <dbReference type="Rhea" id="RHEA:19670"/>
    </physiologicalReaction>
</comment>
<comment type="subunit">
    <text evidence="2">Monomer.</text>
</comment>
<comment type="subcellular location">
    <subcellularLocation>
        <location evidence="2">Cytoplasm</location>
    </subcellularLocation>
</comment>
<comment type="similarity">
    <text evidence="2">Belongs to the TRAFAC class translation factor GTPase superfamily. Classic translation factor GTPase family. EF-Tu/EF-1A subfamily.</text>
</comment>
<organism>
    <name type="scientific">Rippkaea orientalis (strain PCC 8801 / RF-1)</name>
    <name type="common">Cyanothece sp. (strain PCC 8801)</name>
    <dbReference type="NCBI Taxonomy" id="41431"/>
    <lineage>
        <taxon>Bacteria</taxon>
        <taxon>Bacillati</taxon>
        <taxon>Cyanobacteriota</taxon>
        <taxon>Cyanophyceae</taxon>
        <taxon>Oscillatoriophycideae</taxon>
        <taxon>Chroococcales</taxon>
        <taxon>Aphanothecaceae</taxon>
        <taxon>Rippkaea</taxon>
        <taxon>Rippkaea orientalis</taxon>
    </lineage>
</organism>
<sequence length="409" mass="44647">MARAKFERTKPHVNIGTIGHVDHGKTTLTAAITMTLAAQGKAKARNYEDIDAAPEEKARGITINTAHVEYETDSRHYAHVDCPGHADYVKNMITGAAQMDGGILVVSAADGPMPQTREHILLAKQVGVPNLVVFLNKQDMVDDEELLELVELEVRELLTEYGFDGDNIPIVAGSALQAVEALKANPKIAKGDNEWTDKILALMDEVDAYIPEPEREIDKPFLMAVEDVFSISGRGTVATGRIERGKVKVGETVEIVGIRATSSTTVTGVEMFQKTLEEGLAGDNVGLLLRGVKKEDIERGMVIAKPGSITPHTQFEGEVYVLTKEEGGRHTPFFKNYKPQFYVRTTDVTGSIVDYTSDEGETVEMVMPGDRIKMTVELINPIAIEQGMRFAIREGGRTIGAGVVSKILK</sequence>
<protein>
    <recommendedName>
        <fullName evidence="2">Elongation factor Tu</fullName>
        <shortName evidence="2">EF-Tu</shortName>
        <ecNumber evidence="2">3.6.5.3</ecNumber>
    </recommendedName>
</protein>
<gene>
    <name evidence="2" type="primary">tuf</name>
    <name type="ordered locus">PCC8801_1536</name>
</gene>
<accession>B7JUP5</accession>
<name>EFTU_RIPO1</name>
<feature type="chain" id="PRO_1000201400" description="Elongation factor Tu">
    <location>
        <begin position="1"/>
        <end position="409"/>
    </location>
</feature>
<feature type="domain" description="tr-type G">
    <location>
        <begin position="10"/>
        <end position="214"/>
    </location>
</feature>
<feature type="region of interest" description="G1" evidence="1">
    <location>
        <begin position="19"/>
        <end position="26"/>
    </location>
</feature>
<feature type="region of interest" description="G2" evidence="1">
    <location>
        <begin position="60"/>
        <end position="64"/>
    </location>
</feature>
<feature type="region of interest" description="G3" evidence="1">
    <location>
        <begin position="81"/>
        <end position="84"/>
    </location>
</feature>
<feature type="region of interest" description="G4" evidence="1">
    <location>
        <begin position="136"/>
        <end position="139"/>
    </location>
</feature>
<feature type="region of interest" description="G5" evidence="1">
    <location>
        <begin position="174"/>
        <end position="176"/>
    </location>
</feature>
<feature type="binding site" evidence="2">
    <location>
        <begin position="19"/>
        <end position="26"/>
    </location>
    <ligand>
        <name>GTP</name>
        <dbReference type="ChEBI" id="CHEBI:37565"/>
    </ligand>
</feature>
<feature type="binding site" evidence="2">
    <location>
        <position position="26"/>
    </location>
    <ligand>
        <name>Mg(2+)</name>
        <dbReference type="ChEBI" id="CHEBI:18420"/>
    </ligand>
</feature>
<feature type="binding site" evidence="2">
    <location>
        <begin position="81"/>
        <end position="85"/>
    </location>
    <ligand>
        <name>GTP</name>
        <dbReference type="ChEBI" id="CHEBI:37565"/>
    </ligand>
</feature>
<feature type="binding site" evidence="2">
    <location>
        <begin position="136"/>
        <end position="139"/>
    </location>
    <ligand>
        <name>GTP</name>
        <dbReference type="ChEBI" id="CHEBI:37565"/>
    </ligand>
</feature>
<keyword id="KW-0963">Cytoplasm</keyword>
<keyword id="KW-0251">Elongation factor</keyword>
<keyword id="KW-0342">GTP-binding</keyword>
<keyword id="KW-0378">Hydrolase</keyword>
<keyword id="KW-0460">Magnesium</keyword>
<keyword id="KW-0479">Metal-binding</keyword>
<keyword id="KW-0547">Nucleotide-binding</keyword>
<keyword id="KW-0648">Protein biosynthesis</keyword>
<keyword id="KW-1185">Reference proteome</keyword>